<protein>
    <recommendedName>
        <fullName evidence="1">N-acetyl-gamma-glutamyl-phosphate reductase 2</fullName>
        <shortName evidence="1">AGPR 2</shortName>
        <ecNumber evidence="1">1.2.1.38</ecNumber>
    </recommendedName>
    <alternativeName>
        <fullName evidence="1">N-acetyl-glutamate semialdehyde dehydrogenase 2</fullName>
        <shortName evidence="1">NAGSA dehydrogenase 2</shortName>
    </alternativeName>
</protein>
<accession>P54894</accession>
<reference key="1">
    <citation type="journal article" date="1992" name="Mol. Microbiol.">
        <title>Isolation of arginine auxotrophs, cloning by mutant complementation, and sequence analysis of the argC gene from the cyanobacterium Anabaena species PCC 7120.</title>
        <authorList>
            <person name="Floriano B."/>
            <person name="Herrero A."/>
            <person name="Flores E."/>
        </authorList>
    </citation>
    <scope>NUCLEOTIDE SEQUENCE [GENOMIC DNA]</scope>
</reference>
<reference key="2">
    <citation type="journal article" date="1994" name="J. Bacteriol.">
        <title>Analysis of expression of the argC and argD genes in the cyanobacterium Anabaena sp. strain PCC 7120.</title>
        <authorList>
            <person name="Floriano B."/>
            <person name="Herrero A."/>
            <person name="Flores E."/>
        </authorList>
    </citation>
    <scope>NUCLEOTIDE SEQUENCE [GENOMIC DNA]</scope>
</reference>
<reference key="3">
    <citation type="journal article" date="2001" name="DNA Res.">
        <title>Complete genomic sequence of the filamentous nitrogen-fixing cyanobacterium Anabaena sp. strain PCC 7120.</title>
        <authorList>
            <person name="Kaneko T."/>
            <person name="Nakamura Y."/>
            <person name="Wolk C.P."/>
            <person name="Kuritz T."/>
            <person name="Sasamoto S."/>
            <person name="Watanabe A."/>
            <person name="Iriguchi M."/>
            <person name="Ishikawa A."/>
            <person name="Kawashima K."/>
            <person name="Kimura T."/>
            <person name="Kishida Y."/>
            <person name="Kohara M."/>
            <person name="Matsumoto M."/>
            <person name="Matsuno A."/>
            <person name="Muraki A."/>
            <person name="Nakazaki N."/>
            <person name="Shimpo S."/>
            <person name="Sugimoto M."/>
            <person name="Takazawa M."/>
            <person name="Yamada M."/>
            <person name="Yasuda M."/>
            <person name="Tabata S."/>
        </authorList>
    </citation>
    <scope>NUCLEOTIDE SEQUENCE [LARGE SCALE GENOMIC DNA]</scope>
    <source>
        <strain>PCC 7120 / SAG 25.82 / UTEX 2576</strain>
    </source>
</reference>
<keyword id="KW-0028">Amino-acid biosynthesis</keyword>
<keyword id="KW-0055">Arginine biosynthesis</keyword>
<keyword id="KW-0963">Cytoplasm</keyword>
<keyword id="KW-0521">NADP</keyword>
<keyword id="KW-0560">Oxidoreductase</keyword>
<keyword id="KW-1185">Reference proteome</keyword>
<sequence length="322" mass="34823">MNKPKIFIDGEAGTTGLQIYSRLNERDDIELVSIAASKRKDADERAKLLNSVDVAILCLPDDAAREAVSLVNSSQVKILDASTAYRTAQGWVYGFPEMNPGQREKIANAQFVSNPGCYPTGFLACVRPLIAQGILPSSFPITINAVSGYSGGGKSLIQKYDSFHEQQKGATSDYPFGIYGLQFGHKHVKEMHQHSGLASPPLFIPAVGDFEQGMLVQIPLPLWTLDNPPSGEEIHQAIAQYYQGEKFVQVAPFKDPSLLRDGTFLDATAVNGTNIVQVFVFGNDNTKEALLVARLDNLGKGASGAAVQNLNIMLGLPEELGL</sequence>
<proteinExistence type="inferred from homology"/>
<dbReference type="EC" id="1.2.1.38" evidence="1"/>
<dbReference type="EMBL" id="X65511">
    <property type="protein sequence ID" value="CAA46483.1"/>
    <property type="molecule type" value="Genomic_DNA"/>
</dbReference>
<dbReference type="EMBL" id="BA000019">
    <property type="protein sequence ID" value="BAB74197.1"/>
    <property type="molecule type" value="Genomic_DNA"/>
</dbReference>
<dbReference type="PIR" id="AC2118">
    <property type="entry name" value="AC2118"/>
</dbReference>
<dbReference type="PIR" id="S24753">
    <property type="entry name" value="S24753"/>
</dbReference>
<dbReference type="RefSeq" id="WP_010996654.1">
    <property type="nucleotide sequence ID" value="NZ_RSCN01000002.1"/>
</dbReference>
<dbReference type="SMR" id="P54894"/>
<dbReference type="STRING" id="103690.gene:10494529"/>
<dbReference type="KEGG" id="ana:all2498"/>
<dbReference type="eggNOG" id="COG0002">
    <property type="taxonomic scope" value="Bacteria"/>
</dbReference>
<dbReference type="OrthoDB" id="9801289at2"/>
<dbReference type="UniPathway" id="UPA00068">
    <property type="reaction ID" value="UER00108"/>
</dbReference>
<dbReference type="Proteomes" id="UP000002483">
    <property type="component" value="Chromosome"/>
</dbReference>
<dbReference type="GO" id="GO:0005737">
    <property type="term" value="C:cytoplasm"/>
    <property type="evidence" value="ECO:0007669"/>
    <property type="project" value="UniProtKB-SubCell"/>
</dbReference>
<dbReference type="GO" id="GO:0003942">
    <property type="term" value="F:N-acetyl-gamma-glutamyl-phosphate reductase activity"/>
    <property type="evidence" value="ECO:0007669"/>
    <property type="project" value="UniProtKB-UniRule"/>
</dbReference>
<dbReference type="GO" id="GO:0051287">
    <property type="term" value="F:NAD binding"/>
    <property type="evidence" value="ECO:0007669"/>
    <property type="project" value="InterPro"/>
</dbReference>
<dbReference type="GO" id="GO:0006526">
    <property type="term" value="P:L-arginine biosynthetic process"/>
    <property type="evidence" value="ECO:0007669"/>
    <property type="project" value="UniProtKB-UniRule"/>
</dbReference>
<dbReference type="CDD" id="cd23935">
    <property type="entry name" value="AGPR_2_C"/>
    <property type="match status" value="1"/>
</dbReference>
<dbReference type="CDD" id="cd17896">
    <property type="entry name" value="AGPR_2_N"/>
    <property type="match status" value="1"/>
</dbReference>
<dbReference type="Gene3D" id="3.30.360.10">
    <property type="entry name" value="Dihydrodipicolinate Reductase, domain 2"/>
    <property type="match status" value="1"/>
</dbReference>
<dbReference type="Gene3D" id="3.40.50.720">
    <property type="entry name" value="NAD(P)-binding Rossmann-like Domain"/>
    <property type="match status" value="1"/>
</dbReference>
<dbReference type="HAMAP" id="MF_01110">
    <property type="entry name" value="ArgC_type2"/>
    <property type="match status" value="1"/>
</dbReference>
<dbReference type="InterPro" id="IPR023013">
    <property type="entry name" value="AGPR_AS"/>
</dbReference>
<dbReference type="InterPro" id="IPR010136">
    <property type="entry name" value="AGPR_type-2"/>
</dbReference>
<dbReference type="InterPro" id="IPR036291">
    <property type="entry name" value="NAD(P)-bd_dom_sf"/>
</dbReference>
<dbReference type="InterPro" id="IPR050085">
    <property type="entry name" value="NAGSA_dehydrogenase"/>
</dbReference>
<dbReference type="InterPro" id="IPR000534">
    <property type="entry name" value="Semialdehyde_DH_NAD-bd"/>
</dbReference>
<dbReference type="NCBIfam" id="TIGR01851">
    <property type="entry name" value="argC_other"/>
    <property type="match status" value="1"/>
</dbReference>
<dbReference type="PANTHER" id="PTHR32338:SF10">
    <property type="entry name" value="N-ACETYL-GAMMA-GLUTAMYL-PHOSPHATE REDUCTASE, CHLOROPLASTIC-RELATED"/>
    <property type="match status" value="1"/>
</dbReference>
<dbReference type="PANTHER" id="PTHR32338">
    <property type="entry name" value="N-ACETYL-GAMMA-GLUTAMYL-PHOSPHATE REDUCTASE, CHLOROPLASTIC-RELATED-RELATED"/>
    <property type="match status" value="1"/>
</dbReference>
<dbReference type="Pfam" id="PF01118">
    <property type="entry name" value="Semialdhyde_dh"/>
    <property type="match status" value="1"/>
</dbReference>
<dbReference type="Pfam" id="PF22698">
    <property type="entry name" value="Semialdhyde_dhC_1"/>
    <property type="match status" value="1"/>
</dbReference>
<dbReference type="SMART" id="SM00859">
    <property type="entry name" value="Semialdhyde_dh"/>
    <property type="match status" value="1"/>
</dbReference>
<dbReference type="SUPFAM" id="SSF55347">
    <property type="entry name" value="Glyceraldehyde-3-phosphate dehydrogenase-like, C-terminal domain"/>
    <property type="match status" value="1"/>
</dbReference>
<dbReference type="SUPFAM" id="SSF51735">
    <property type="entry name" value="NAD(P)-binding Rossmann-fold domains"/>
    <property type="match status" value="1"/>
</dbReference>
<dbReference type="PROSITE" id="PS01224">
    <property type="entry name" value="ARGC"/>
    <property type="match status" value="1"/>
</dbReference>
<comment type="function">
    <text evidence="1">Catalyzes the NADPH-dependent reduction of N-acetyl-5-glutamyl phosphate to yield N-acetyl-L-glutamate 5-semialdehyde.</text>
</comment>
<comment type="catalytic activity">
    <reaction evidence="1">
        <text>N-acetyl-L-glutamate 5-semialdehyde + phosphate + NADP(+) = N-acetyl-L-glutamyl 5-phosphate + NADPH + H(+)</text>
        <dbReference type="Rhea" id="RHEA:21588"/>
        <dbReference type="ChEBI" id="CHEBI:15378"/>
        <dbReference type="ChEBI" id="CHEBI:29123"/>
        <dbReference type="ChEBI" id="CHEBI:43474"/>
        <dbReference type="ChEBI" id="CHEBI:57783"/>
        <dbReference type="ChEBI" id="CHEBI:57936"/>
        <dbReference type="ChEBI" id="CHEBI:58349"/>
        <dbReference type="EC" id="1.2.1.38"/>
    </reaction>
</comment>
<comment type="pathway">
    <text evidence="1">Amino-acid biosynthesis; L-arginine biosynthesis; N(2)-acetyl-L-ornithine from L-glutamate: step 3/4.</text>
</comment>
<comment type="subcellular location">
    <subcellularLocation>
        <location evidence="1">Cytoplasm</location>
    </subcellularLocation>
</comment>
<comment type="similarity">
    <text evidence="1">Belongs to the NAGSA dehydrogenase family. Type 2 subfamily.</text>
</comment>
<organism>
    <name type="scientific">Nostoc sp. (strain PCC 7120 / SAG 25.82 / UTEX 2576)</name>
    <dbReference type="NCBI Taxonomy" id="103690"/>
    <lineage>
        <taxon>Bacteria</taxon>
        <taxon>Bacillati</taxon>
        <taxon>Cyanobacteriota</taxon>
        <taxon>Cyanophyceae</taxon>
        <taxon>Nostocales</taxon>
        <taxon>Nostocaceae</taxon>
        <taxon>Nostoc</taxon>
    </lineage>
</organism>
<evidence type="ECO:0000255" key="1">
    <source>
        <dbReference type="HAMAP-Rule" id="MF_01110"/>
    </source>
</evidence>
<feature type="chain" id="PRO_0000112503" description="N-acetyl-gamma-glutamyl-phosphate reductase 2">
    <location>
        <begin position="1"/>
        <end position="322"/>
    </location>
</feature>
<feature type="active site" evidence="1">
    <location>
        <position position="117"/>
    </location>
</feature>
<name>ARGC2_NOSS1</name>
<gene>
    <name evidence="1" type="primary">argC2</name>
    <name type="synonym">argC</name>
    <name type="ordered locus">all2498</name>
</gene>